<proteinExistence type="inferred from homology"/>
<comment type="function">
    <text evidence="1">Probable polyketide synthase.</text>
</comment>
<comment type="cofactor">
    <cofactor evidence="1">
        <name>pantetheine 4'-phosphate</name>
        <dbReference type="ChEBI" id="CHEBI:47942"/>
    </cofactor>
    <text evidence="1">Binds 1 phosphopantetheine covalently.</text>
</comment>
<comment type="domain">
    <text evidence="1">Modular protein that is responsible for the completion of one condensation-processing cycle. The beta-ketoacyl synthase region is responsible for the actual condensation reaction while the acyl/malonyl transferase region is responsible for incorporating carboxylic acids units onto an acyl carrier protein (ACP) domain (By similarity).</text>
</comment>
<comment type="miscellaneous">
    <text>Encoded by one of the numerous copies of polyketide synthase genes.</text>
</comment>
<accession>Q559A9</accession>
<accession>Q86IG0</accession>
<organism>
    <name type="scientific">Dictyostelium discoideum</name>
    <name type="common">Social amoeba</name>
    <dbReference type="NCBI Taxonomy" id="44689"/>
    <lineage>
        <taxon>Eukaryota</taxon>
        <taxon>Amoebozoa</taxon>
        <taxon>Evosea</taxon>
        <taxon>Eumycetozoa</taxon>
        <taxon>Dictyostelia</taxon>
        <taxon>Dictyosteliales</taxon>
        <taxon>Dictyosteliaceae</taxon>
        <taxon>Dictyostelium</taxon>
    </lineage>
</organism>
<name>PKS13_DICDI</name>
<feature type="chain" id="PRO_0000376886" description="Probable polyketide synthase 13">
    <location>
        <begin position="1"/>
        <end position="2551"/>
    </location>
</feature>
<feature type="domain" description="Ketosynthase family 3 (KS3)" evidence="3">
    <location>
        <begin position="10"/>
        <end position="434"/>
    </location>
</feature>
<feature type="domain" description="PKS/mFAS DH" evidence="4">
    <location>
        <begin position="928"/>
        <end position="1226"/>
    </location>
</feature>
<feature type="domain" description="Carrier" evidence="2">
    <location>
        <begin position="2465"/>
        <end position="2542"/>
    </location>
</feature>
<feature type="region of interest" description="Acyl/malonyl transferase">
    <location>
        <begin position="621"/>
        <end position="654"/>
    </location>
</feature>
<feature type="region of interest" description="N-terminal hotdog fold" evidence="4">
    <location>
        <begin position="928"/>
        <end position="1057"/>
    </location>
</feature>
<feature type="region of interest" description="C-terminal hotdog fold" evidence="4">
    <location>
        <begin position="1076"/>
        <end position="1226"/>
    </location>
</feature>
<feature type="active site" description="For beta-ketoacyl synthase activity" evidence="3">
    <location>
        <position position="176"/>
    </location>
</feature>
<feature type="active site" description="For beta-ketoacyl synthase activity" evidence="3">
    <location>
        <position position="317"/>
    </location>
</feature>
<feature type="active site" description="For beta-ketoacyl synthase activity" evidence="3">
    <location>
        <position position="358"/>
    </location>
</feature>
<feature type="active site" description="For acyl/malonyl transferase activity" evidence="5">
    <location>
        <position position="631"/>
    </location>
</feature>
<feature type="active site" description="Proton acceptor; for dehydratase activity" evidence="4">
    <location>
        <position position="961"/>
    </location>
</feature>
<feature type="active site" description="Proton donor; for dehydratase activity" evidence="4">
    <location>
        <position position="1136"/>
    </location>
</feature>
<feature type="modified residue" description="O-(pantetheine 4'-phosphoryl)serine" evidence="2">
    <location>
        <position position="2502"/>
    </location>
</feature>
<dbReference type="EC" id="2.3.1.-"/>
<dbReference type="EMBL" id="AAFI02000008">
    <property type="protein sequence ID" value="EAL71128.1"/>
    <property type="molecule type" value="Genomic_DNA"/>
</dbReference>
<dbReference type="RefSeq" id="XP_644907.1">
    <property type="nucleotide sequence ID" value="XM_639815.1"/>
</dbReference>
<dbReference type="SMR" id="Q559A9"/>
<dbReference type="FunCoup" id="Q559A9">
    <property type="interactions" value="4"/>
</dbReference>
<dbReference type="STRING" id="44689.Q559A9"/>
<dbReference type="PaxDb" id="44689-DDB0230082"/>
<dbReference type="EnsemblProtists" id="EAL71128">
    <property type="protein sequence ID" value="EAL71128"/>
    <property type="gene ID" value="DDB_G0272981"/>
</dbReference>
<dbReference type="GeneID" id="8618586"/>
<dbReference type="KEGG" id="ddi:DDB_G0272981"/>
<dbReference type="dictyBase" id="DDB_G0272981">
    <property type="gene designation" value="pks13"/>
</dbReference>
<dbReference type="VEuPathDB" id="AmoebaDB:DDB_G0272981"/>
<dbReference type="eggNOG" id="KOG1202">
    <property type="taxonomic scope" value="Eukaryota"/>
</dbReference>
<dbReference type="HOGENOM" id="CLU_000022_31_0_1"/>
<dbReference type="InParanoid" id="Q559A9"/>
<dbReference type="PhylomeDB" id="Q559A9"/>
<dbReference type="PRO" id="PR:Q559A9"/>
<dbReference type="Proteomes" id="UP000002195">
    <property type="component" value="Chromosome 2"/>
</dbReference>
<dbReference type="GO" id="GO:0004315">
    <property type="term" value="F:3-oxoacyl-[acyl-carrier-protein] synthase activity"/>
    <property type="evidence" value="ECO:0007669"/>
    <property type="project" value="InterPro"/>
</dbReference>
<dbReference type="GO" id="GO:0016491">
    <property type="term" value="F:oxidoreductase activity"/>
    <property type="evidence" value="ECO:0007669"/>
    <property type="project" value="InterPro"/>
</dbReference>
<dbReference type="GO" id="GO:0006633">
    <property type="term" value="P:fatty acid biosynthetic process"/>
    <property type="evidence" value="ECO:0000318"/>
    <property type="project" value="GO_Central"/>
</dbReference>
<dbReference type="CDD" id="cd05195">
    <property type="entry name" value="enoyl_red"/>
    <property type="match status" value="1"/>
</dbReference>
<dbReference type="CDD" id="cd08954">
    <property type="entry name" value="KR_1_FAS_SDR_x"/>
    <property type="match status" value="1"/>
</dbReference>
<dbReference type="CDD" id="cd00833">
    <property type="entry name" value="PKS"/>
    <property type="match status" value="1"/>
</dbReference>
<dbReference type="Gene3D" id="3.40.47.10">
    <property type="match status" value="1"/>
</dbReference>
<dbReference type="Gene3D" id="3.40.366.10">
    <property type="entry name" value="Malonyl-Coenzyme A Acyl Carrier Protein, domain 2"/>
    <property type="match status" value="1"/>
</dbReference>
<dbReference type="Gene3D" id="3.90.180.10">
    <property type="entry name" value="Medium-chain alcohol dehydrogenases, catalytic domain"/>
    <property type="match status" value="1"/>
</dbReference>
<dbReference type="Gene3D" id="3.40.50.720">
    <property type="entry name" value="NAD(P)-binding Rossmann-like Domain"/>
    <property type="match status" value="2"/>
</dbReference>
<dbReference type="Gene3D" id="3.10.129.110">
    <property type="entry name" value="Polyketide synthase dehydratase"/>
    <property type="match status" value="1"/>
</dbReference>
<dbReference type="Gene3D" id="3.40.50.150">
    <property type="entry name" value="Vaccinia Virus protein VP39"/>
    <property type="match status" value="1"/>
</dbReference>
<dbReference type="InterPro" id="IPR001227">
    <property type="entry name" value="Ac_transferase_dom_sf"/>
</dbReference>
<dbReference type="InterPro" id="IPR036736">
    <property type="entry name" value="ACP-like_sf"/>
</dbReference>
<dbReference type="InterPro" id="IPR014043">
    <property type="entry name" value="Acyl_transferase_dom"/>
</dbReference>
<dbReference type="InterPro" id="IPR016035">
    <property type="entry name" value="Acyl_Trfase/lysoPLipase"/>
</dbReference>
<dbReference type="InterPro" id="IPR013154">
    <property type="entry name" value="ADH-like_N"/>
</dbReference>
<dbReference type="InterPro" id="IPR011032">
    <property type="entry name" value="GroES-like_sf"/>
</dbReference>
<dbReference type="InterPro" id="IPR018201">
    <property type="entry name" value="Ketoacyl_synth_AS"/>
</dbReference>
<dbReference type="InterPro" id="IPR014031">
    <property type="entry name" value="Ketoacyl_synth_C"/>
</dbReference>
<dbReference type="InterPro" id="IPR014030">
    <property type="entry name" value="Ketoacyl_synth_N"/>
</dbReference>
<dbReference type="InterPro" id="IPR016036">
    <property type="entry name" value="Malonyl_transacylase_ACP-bd"/>
</dbReference>
<dbReference type="InterPro" id="IPR013217">
    <property type="entry name" value="Methyltransf_12"/>
</dbReference>
<dbReference type="InterPro" id="IPR036291">
    <property type="entry name" value="NAD(P)-bd_dom_sf"/>
</dbReference>
<dbReference type="InterPro" id="IPR032821">
    <property type="entry name" value="PKS_assoc"/>
</dbReference>
<dbReference type="InterPro" id="IPR020841">
    <property type="entry name" value="PKS_Beta-ketoAc_synthase_dom"/>
</dbReference>
<dbReference type="InterPro" id="IPR042104">
    <property type="entry name" value="PKS_dehydratase_sf"/>
</dbReference>
<dbReference type="InterPro" id="IPR049551">
    <property type="entry name" value="PKS_DH_C"/>
</dbReference>
<dbReference type="InterPro" id="IPR020843">
    <property type="entry name" value="PKS_ER"/>
</dbReference>
<dbReference type="InterPro" id="IPR013968">
    <property type="entry name" value="PKS_KR"/>
</dbReference>
<dbReference type="InterPro" id="IPR049900">
    <property type="entry name" value="PKS_mFAS_DH"/>
</dbReference>
<dbReference type="InterPro" id="IPR050444">
    <property type="entry name" value="Polyketide_Synthase"/>
</dbReference>
<dbReference type="InterPro" id="IPR009081">
    <property type="entry name" value="PP-bd_ACP"/>
</dbReference>
<dbReference type="InterPro" id="IPR029063">
    <property type="entry name" value="SAM-dependent_MTases_sf"/>
</dbReference>
<dbReference type="InterPro" id="IPR016039">
    <property type="entry name" value="Thiolase-like"/>
</dbReference>
<dbReference type="PANTHER" id="PTHR45681:SF7">
    <property type="entry name" value="POLYKETIDE SYNTHASE 13-RELATED"/>
    <property type="match status" value="1"/>
</dbReference>
<dbReference type="PANTHER" id="PTHR45681">
    <property type="entry name" value="POLYKETIDE SYNTHASE 44-RELATED"/>
    <property type="match status" value="1"/>
</dbReference>
<dbReference type="Pfam" id="PF23297">
    <property type="entry name" value="ACP_SdgA_C"/>
    <property type="match status" value="1"/>
</dbReference>
<dbReference type="Pfam" id="PF00698">
    <property type="entry name" value="Acyl_transf_1"/>
    <property type="match status" value="1"/>
</dbReference>
<dbReference type="Pfam" id="PF08240">
    <property type="entry name" value="ADH_N"/>
    <property type="match status" value="1"/>
</dbReference>
<dbReference type="Pfam" id="PF16197">
    <property type="entry name" value="KAsynt_C_assoc"/>
    <property type="match status" value="1"/>
</dbReference>
<dbReference type="Pfam" id="PF00109">
    <property type="entry name" value="ketoacyl-synt"/>
    <property type="match status" value="1"/>
</dbReference>
<dbReference type="Pfam" id="PF02801">
    <property type="entry name" value="Ketoacyl-synt_C"/>
    <property type="match status" value="1"/>
</dbReference>
<dbReference type="Pfam" id="PF08659">
    <property type="entry name" value="KR"/>
    <property type="match status" value="1"/>
</dbReference>
<dbReference type="Pfam" id="PF08242">
    <property type="entry name" value="Methyltransf_12"/>
    <property type="match status" value="1"/>
</dbReference>
<dbReference type="Pfam" id="PF14765">
    <property type="entry name" value="PS-DH"/>
    <property type="match status" value="1"/>
</dbReference>
<dbReference type="SMART" id="SM00827">
    <property type="entry name" value="PKS_AT"/>
    <property type="match status" value="1"/>
</dbReference>
<dbReference type="SMART" id="SM00829">
    <property type="entry name" value="PKS_ER"/>
    <property type="match status" value="1"/>
</dbReference>
<dbReference type="SMART" id="SM00822">
    <property type="entry name" value="PKS_KR"/>
    <property type="match status" value="1"/>
</dbReference>
<dbReference type="SMART" id="SM00825">
    <property type="entry name" value="PKS_KS"/>
    <property type="match status" value="1"/>
</dbReference>
<dbReference type="SUPFAM" id="SSF47336">
    <property type="entry name" value="ACP-like"/>
    <property type="match status" value="1"/>
</dbReference>
<dbReference type="SUPFAM" id="SSF52151">
    <property type="entry name" value="FabD/lysophospholipase-like"/>
    <property type="match status" value="1"/>
</dbReference>
<dbReference type="SUPFAM" id="SSF50129">
    <property type="entry name" value="GroES-like"/>
    <property type="match status" value="1"/>
</dbReference>
<dbReference type="SUPFAM" id="SSF51735">
    <property type="entry name" value="NAD(P)-binding Rossmann-fold domains"/>
    <property type="match status" value="2"/>
</dbReference>
<dbReference type="SUPFAM" id="SSF55048">
    <property type="entry name" value="Probable ACP-binding domain of malonyl-CoA ACP transacylase"/>
    <property type="match status" value="1"/>
</dbReference>
<dbReference type="SUPFAM" id="SSF53335">
    <property type="entry name" value="S-adenosyl-L-methionine-dependent methyltransferases"/>
    <property type="match status" value="1"/>
</dbReference>
<dbReference type="SUPFAM" id="SSF53901">
    <property type="entry name" value="Thiolase-like"/>
    <property type="match status" value="1"/>
</dbReference>
<dbReference type="PROSITE" id="PS50075">
    <property type="entry name" value="CARRIER"/>
    <property type="match status" value="1"/>
</dbReference>
<dbReference type="PROSITE" id="PS00606">
    <property type="entry name" value="KS3_1"/>
    <property type="match status" value="1"/>
</dbReference>
<dbReference type="PROSITE" id="PS52004">
    <property type="entry name" value="KS3_2"/>
    <property type="match status" value="1"/>
</dbReference>
<dbReference type="PROSITE" id="PS52019">
    <property type="entry name" value="PKS_MFAS_DH"/>
    <property type="match status" value="1"/>
</dbReference>
<sequence>MENFKYRNNENDVAIIGIGFRLPGCKNFTPNELWNNLKNGFNGVVELSNRWSDNFYTMGKVSSAYAGLLPFDELKSFDPLFFGINPTEVPTIDPQQRILLKCTWEAFEDAGIDPIKIRGSNTSVFIGTSTNDYQRIIREKDQTITNAFGTSLHATSNRISYCFDFRGPSMTLDTACSSSLNCVKLGYQSIRDGTSNLSIAGGVNLIIDPYFTASISDLNILSKTGSCKTFDASADGFARAEGSGIIVMKNLKQAMIDGDKIYCVIKGASSNVDGGGLQDKSNFYAPSSLSQCNNIKMALKSTNGTVEPKDISYFECHGTGTPTGDPIETRGISMVFNDESRSKENPLLIGSIKSNIGHLEAGSGIASLIKCCLMFKNKCFAPNINFKVPNPKIKFEEWNLKVVTEPIQFTKSNTCIGLSNFGVTGSNCCLILSQFNNNNNDNQIVGNNNNIKSNKEYLIPFSSNSVKSLENYQQLLIKNGENEFKFLEFIKHQIFTKPTSLYQRSVVIASSWDQFNNAKIMKTSNSKSSNISIERNNPITVFVFCGQGSQYDRMGLELYNNDFIFKESMDLLDNKLSKYYGYSVLEKLRNCDSKSIQHPMIAQPVMCMFNISLFELYKHWGIEVSFIIGHSLGEIPAAYCSGMINIDTLCYLIYHRSIAQTKTHTNGRMLSINISADEYFSQYSKQYPDIEIACFNSPTSIVIAGNEQKLNEISEILKEKGIFSAMLASLSSFHTSSQNKVKEDIVNKQFDSKQSEIPIFSTVTTNLFDSVTSPFNSSYVFNNIVSPVKFSQTISNLYKHIESNQLGNDIVFIELAPHPTLQFYLKQMIPKPTNDDNSIEFKVSVYSALNKKNNDIEEIQRTISQLYCDNGYNVNFKCQFQHDDTHGSINSNINQLSNISLPHYQWDDEKYWKEDPSISKLIVNGPQTDNLGYLNENSPNSKSYETFIDIKRPPFQYLKGHMVKGKYYFPGCGYIDNLLKIYKSQDLTINQMGFKSPLIFIEGVNQALQTNIFKKSTSNTTTNNNDEFRVEYHFNDQKTNRWILSSFGDFQLSNHSSNSDNLEKINIKQLIQNQCNLTKLSRDELYSHIKSKTGLTYNGVFQGVNKCYLGENCSLSEVSLELKREPSSFFNTAVLDTCLHGMLCLLEEQSQLVFDRIEGFKYHSSNVPTSEEEMKIHSNIYVYSTINPSRIGDSYSASIVIMMEDGTVLIEIENAVCTSLTPIKESISVKYPTNQLFSMYLQSKDSPIPSPLNFKSLYNQNQQQLKIDKQFTDWMQKCEKFISNQFFKNIEKRNPEINLEILNSKTIIELKSKYCQNLKNERLFQFVFETIKQLGVNAYDDDDDLTIDSSEDRKSIYEILIKSTKVIPKLLFPLEDEDLTIDSPQSLFENGLLDRFYNNPNLMTNQCQLIAQIIKESLKPLLNKKMVFRILEMGGGTCSLSVVVLNLINQLLLENPSFEIDIEYTWSDISPSFISAAKEKLSHIDKRINILYRSIDIEQPFIEKQDLSPSYYDFVIMSNVLHVVKKLSPSLDEIHKILTPNGHLLFVEIPYKELISDSIFGAFNQWWAFEDTDIRKDRCSIPPNQWIQVLSNHNYKDTIVSDNKECTWCCFVIHSQKPSLLELSKKIECNQYDNIIVFGNENSQDNFTKSIKLSYNNNIIKWVSNIVEIKKFIKLNIITNNSIIYFTKGIEELTIDNFKLINFQYIQINQLLLKYESKCKNVLVTRDCDGSNYLASSLIGAARYFDEYRQLELFTLDFDNDTIQSCDECSSSSCSNLIKLIEPLIDPKINIQREFLIRNNRVYFERAKLETNLKKSFKSESFENSNKLISTLNFNLDYQLQSKPFKQLLQNEIEVEIKATGINYRDYLVFTGSLPIEKTNHNGISNQPEFGVDFSGIVTKVGGGGGNGEFKVGDRVYGIGHNTTSSHITIDSRYASLIPNSLDYIEASSITSSYILSLYGIFDIGNLDIQDNESILIHSGTGGIGLSALNSLRWKGHKSHLFVTVSSKEKEQYLRDNYGSFITGIYSNKDKNYPKLIKEKLNQLGSNKQGVDLILSSLPNGDDNLNFKCLAKNGRIIDLSNNIDLFNISKSKIKKLLNTINDGFESGELQVIPIIEFSNSNIRDAIEFINERQHIGKIVISHDDSNLLIDLINKHSNQPNYSILKSDYQISQSNLGKNILITGQSGIVLEILKWIIKFSNSIENVIILSKSLMKWELELLIGKTMKKANNKIKFHFKSVDVSDSIQVENSINQILNDNPNIVNIDSIFHFAFTQITKKVEEIDMESLNVSHNAKTIGAINLHNQSINRNWRLNNFVMASSATSIIGSTDQCSYVCANTVLDSLSKYRKSIGLPSICTNYGAIESAGFVSKNESVAAMFNGIGIISISTDLILGTLDLQIQNQQSSTNLMLSDFNFLNFVNNNLQLSLISKFDFQTNLAKNQVNEKLQNQTQNQNLQIQSPSSTTDCQTIIKDSFLHKISEVLSIDISKLNLDLKLLDYGADSLAIVQIKNWIDMEVSPNLIVIQQLQTFTITSSIQYTINSFLKKKVQSQE</sequence>
<evidence type="ECO:0000250" key="1"/>
<evidence type="ECO:0000255" key="2">
    <source>
        <dbReference type="PROSITE-ProRule" id="PRU00258"/>
    </source>
</evidence>
<evidence type="ECO:0000255" key="3">
    <source>
        <dbReference type="PROSITE-ProRule" id="PRU01348"/>
    </source>
</evidence>
<evidence type="ECO:0000255" key="4">
    <source>
        <dbReference type="PROSITE-ProRule" id="PRU01363"/>
    </source>
</evidence>
<evidence type="ECO:0000255" key="5">
    <source>
        <dbReference type="PROSITE-ProRule" id="PRU10022"/>
    </source>
</evidence>
<keyword id="KW-0596">Phosphopantetheine</keyword>
<keyword id="KW-0597">Phosphoprotein</keyword>
<keyword id="KW-1185">Reference proteome</keyword>
<keyword id="KW-0808">Transferase</keyword>
<protein>
    <recommendedName>
        <fullName>Probable polyketide synthase 13</fullName>
        <shortName>dipks13</shortName>
        <ecNumber>2.3.1.-</ecNumber>
    </recommendedName>
</protein>
<reference key="1">
    <citation type="journal article" date="2002" name="Nature">
        <title>Sequence and analysis of chromosome 2 of Dictyostelium discoideum.</title>
        <authorList>
            <person name="Gloeckner G."/>
            <person name="Eichinger L."/>
            <person name="Szafranski K."/>
            <person name="Pachebat J.A."/>
            <person name="Bankier A.T."/>
            <person name="Dear P.H."/>
            <person name="Lehmann R."/>
            <person name="Baumgart C."/>
            <person name="Parra G."/>
            <person name="Abril J.F."/>
            <person name="Guigo R."/>
            <person name="Kumpf K."/>
            <person name="Tunggal B."/>
            <person name="Cox E.C."/>
            <person name="Quail M.A."/>
            <person name="Platzer M."/>
            <person name="Rosenthal A."/>
            <person name="Noegel A.A."/>
        </authorList>
    </citation>
    <scope>NUCLEOTIDE SEQUENCE [LARGE SCALE GENOMIC DNA]</scope>
    <source>
        <strain>AX4</strain>
    </source>
</reference>
<reference key="2">
    <citation type="journal article" date="2005" name="Nature">
        <title>The genome of the social amoeba Dictyostelium discoideum.</title>
        <authorList>
            <person name="Eichinger L."/>
            <person name="Pachebat J.A."/>
            <person name="Gloeckner G."/>
            <person name="Rajandream M.A."/>
            <person name="Sucgang R."/>
            <person name="Berriman M."/>
            <person name="Song J."/>
            <person name="Olsen R."/>
            <person name="Szafranski K."/>
            <person name="Xu Q."/>
            <person name="Tunggal B."/>
            <person name="Kummerfeld S."/>
            <person name="Madera M."/>
            <person name="Konfortov B.A."/>
            <person name="Rivero F."/>
            <person name="Bankier A.T."/>
            <person name="Lehmann R."/>
            <person name="Hamlin N."/>
            <person name="Davies R."/>
            <person name="Gaudet P."/>
            <person name="Fey P."/>
            <person name="Pilcher K."/>
            <person name="Chen G."/>
            <person name="Saunders D."/>
            <person name="Sodergren E.J."/>
            <person name="Davis P."/>
            <person name="Kerhornou A."/>
            <person name="Nie X."/>
            <person name="Hall N."/>
            <person name="Anjard C."/>
            <person name="Hemphill L."/>
            <person name="Bason N."/>
            <person name="Farbrother P."/>
            <person name="Desany B."/>
            <person name="Just E."/>
            <person name="Morio T."/>
            <person name="Rost R."/>
            <person name="Churcher C.M."/>
            <person name="Cooper J."/>
            <person name="Haydock S."/>
            <person name="van Driessche N."/>
            <person name="Cronin A."/>
            <person name="Goodhead I."/>
            <person name="Muzny D.M."/>
            <person name="Mourier T."/>
            <person name="Pain A."/>
            <person name="Lu M."/>
            <person name="Harper D."/>
            <person name="Lindsay R."/>
            <person name="Hauser H."/>
            <person name="James K.D."/>
            <person name="Quiles M."/>
            <person name="Madan Babu M."/>
            <person name="Saito T."/>
            <person name="Buchrieser C."/>
            <person name="Wardroper A."/>
            <person name="Felder M."/>
            <person name="Thangavelu M."/>
            <person name="Johnson D."/>
            <person name="Knights A."/>
            <person name="Loulseged H."/>
            <person name="Mungall K.L."/>
            <person name="Oliver K."/>
            <person name="Price C."/>
            <person name="Quail M.A."/>
            <person name="Urushihara H."/>
            <person name="Hernandez J."/>
            <person name="Rabbinowitsch E."/>
            <person name="Steffen D."/>
            <person name="Sanders M."/>
            <person name="Ma J."/>
            <person name="Kohara Y."/>
            <person name="Sharp S."/>
            <person name="Simmonds M.N."/>
            <person name="Spiegler S."/>
            <person name="Tivey A."/>
            <person name="Sugano S."/>
            <person name="White B."/>
            <person name="Walker D."/>
            <person name="Woodward J.R."/>
            <person name="Winckler T."/>
            <person name="Tanaka Y."/>
            <person name="Shaulsky G."/>
            <person name="Schleicher M."/>
            <person name="Weinstock G.M."/>
            <person name="Rosenthal A."/>
            <person name="Cox E.C."/>
            <person name="Chisholm R.L."/>
            <person name="Gibbs R.A."/>
            <person name="Loomis W.F."/>
            <person name="Platzer M."/>
            <person name="Kay R.R."/>
            <person name="Williams J.G."/>
            <person name="Dear P.H."/>
            <person name="Noegel A.A."/>
            <person name="Barrell B.G."/>
            <person name="Kuspa A."/>
        </authorList>
    </citation>
    <scope>NUCLEOTIDE SEQUENCE [LARGE SCALE GENOMIC DNA]</scope>
    <source>
        <strain>AX4</strain>
    </source>
</reference>
<reference key="3">
    <citation type="journal article" date="2007" name="Bioinformatics">
        <title>Polyketide synthase genes and the natural products potential of Dictyostelium discoideum.</title>
        <authorList>
            <person name="Zucko J."/>
            <person name="Skunca N."/>
            <person name="Curk T."/>
            <person name="Zupan B."/>
            <person name="Long P.F."/>
            <person name="Cullum J."/>
            <person name="Kessin R.H."/>
            <person name="Hranueli D."/>
        </authorList>
    </citation>
    <scope>IDENTIFICATION</scope>
</reference>
<gene>
    <name type="primary">pks13</name>
    <name type="ORF">DDB_G0272981</name>
</gene>